<sequence>MRVEVGQIVNTHGIKGEIKVKSNSDFTDVRFQPGQVLTVVHNNNDLEYTVKSHRVHKGLHMLTFEGINNINDIEHLKGSSIYQERDHEDIVLEENEFYYSDIIGCTVFDDQETPIGRVINIFETGANDVWVIKGSKEYLIPYIADVVKEVDVENKKIIITPMEGLLD</sequence>
<reference key="1">
    <citation type="journal article" date="2001" name="Lancet">
        <title>Whole genome sequencing of meticillin-resistant Staphylococcus aureus.</title>
        <authorList>
            <person name="Kuroda M."/>
            <person name="Ohta T."/>
            <person name="Uchiyama I."/>
            <person name="Baba T."/>
            <person name="Yuzawa H."/>
            <person name="Kobayashi I."/>
            <person name="Cui L."/>
            <person name="Oguchi A."/>
            <person name="Aoki K."/>
            <person name="Nagai Y."/>
            <person name="Lian J.-Q."/>
            <person name="Ito T."/>
            <person name="Kanamori M."/>
            <person name="Matsumaru H."/>
            <person name="Maruyama A."/>
            <person name="Murakami H."/>
            <person name="Hosoyama A."/>
            <person name="Mizutani-Ui Y."/>
            <person name="Takahashi N.K."/>
            <person name="Sawano T."/>
            <person name="Inoue R."/>
            <person name="Kaito C."/>
            <person name="Sekimizu K."/>
            <person name="Hirakawa H."/>
            <person name="Kuhara S."/>
            <person name="Goto S."/>
            <person name="Yabuzaki J."/>
            <person name="Kanehisa M."/>
            <person name="Yamashita A."/>
            <person name="Oshima K."/>
            <person name="Furuya K."/>
            <person name="Yoshino C."/>
            <person name="Shiba T."/>
            <person name="Hattori M."/>
            <person name="Ogasawara N."/>
            <person name="Hayashi H."/>
            <person name="Hiramatsu K."/>
        </authorList>
    </citation>
    <scope>NUCLEOTIDE SEQUENCE [LARGE SCALE GENOMIC DNA]</scope>
    <source>
        <strain>N315</strain>
    </source>
</reference>
<reference key="2">
    <citation type="submission" date="2007-10" db="UniProtKB">
        <title>Shotgun proteomic analysis of total and membrane protein extracts of S. aureus strain N315.</title>
        <authorList>
            <person name="Vaezzadeh A.R."/>
            <person name="Deshusses J."/>
            <person name="Lescuyer P."/>
            <person name="Hochstrasser D.F."/>
        </authorList>
    </citation>
    <scope>IDENTIFICATION BY MASS SPECTROMETRY [LARGE SCALE ANALYSIS]</scope>
    <source>
        <strain>N315</strain>
    </source>
</reference>
<feature type="chain" id="PRO_0000163353" description="Ribosome maturation factor RimM">
    <location>
        <begin position="1"/>
        <end position="167"/>
    </location>
</feature>
<feature type="domain" description="PRC barrel" evidence="1">
    <location>
        <begin position="94"/>
        <end position="165"/>
    </location>
</feature>
<accession>P66656</accession>
<accession>Q99UN1</accession>
<dbReference type="EMBL" id="BA000018">
    <property type="protein sequence ID" value="BAB42334.1"/>
    <property type="molecule type" value="Genomic_DNA"/>
</dbReference>
<dbReference type="PIR" id="B89897">
    <property type="entry name" value="B89897"/>
</dbReference>
<dbReference type="RefSeq" id="WP_001261987.1">
    <property type="nucleotide sequence ID" value="NC_002745.2"/>
</dbReference>
<dbReference type="SMR" id="P66656"/>
<dbReference type="EnsemblBacteria" id="BAB42334">
    <property type="protein sequence ID" value="BAB42334"/>
    <property type="gene ID" value="BAB42334"/>
</dbReference>
<dbReference type="KEGG" id="sau:SA1082"/>
<dbReference type="HOGENOM" id="CLU_077636_3_1_9"/>
<dbReference type="GO" id="GO:0005737">
    <property type="term" value="C:cytoplasm"/>
    <property type="evidence" value="ECO:0007669"/>
    <property type="project" value="UniProtKB-SubCell"/>
</dbReference>
<dbReference type="GO" id="GO:0005840">
    <property type="term" value="C:ribosome"/>
    <property type="evidence" value="ECO:0007669"/>
    <property type="project" value="InterPro"/>
</dbReference>
<dbReference type="GO" id="GO:0043022">
    <property type="term" value="F:ribosome binding"/>
    <property type="evidence" value="ECO:0007669"/>
    <property type="project" value="InterPro"/>
</dbReference>
<dbReference type="GO" id="GO:0042274">
    <property type="term" value="P:ribosomal small subunit biogenesis"/>
    <property type="evidence" value="ECO:0007669"/>
    <property type="project" value="UniProtKB-UniRule"/>
</dbReference>
<dbReference type="GO" id="GO:0006364">
    <property type="term" value="P:rRNA processing"/>
    <property type="evidence" value="ECO:0007669"/>
    <property type="project" value="UniProtKB-UniRule"/>
</dbReference>
<dbReference type="Gene3D" id="2.30.30.240">
    <property type="entry name" value="PRC-barrel domain"/>
    <property type="match status" value="1"/>
</dbReference>
<dbReference type="Gene3D" id="2.40.30.60">
    <property type="entry name" value="RimM"/>
    <property type="match status" value="1"/>
</dbReference>
<dbReference type="HAMAP" id="MF_00014">
    <property type="entry name" value="Ribosome_mat_RimM"/>
    <property type="match status" value="1"/>
</dbReference>
<dbReference type="InterPro" id="IPR011033">
    <property type="entry name" value="PRC_barrel-like_sf"/>
</dbReference>
<dbReference type="InterPro" id="IPR056792">
    <property type="entry name" value="PRC_RimM"/>
</dbReference>
<dbReference type="InterPro" id="IPR011961">
    <property type="entry name" value="RimM"/>
</dbReference>
<dbReference type="InterPro" id="IPR002676">
    <property type="entry name" value="RimM_N"/>
</dbReference>
<dbReference type="InterPro" id="IPR036976">
    <property type="entry name" value="RimM_N_sf"/>
</dbReference>
<dbReference type="InterPro" id="IPR009000">
    <property type="entry name" value="Transl_B-barrel_sf"/>
</dbReference>
<dbReference type="NCBIfam" id="TIGR02273">
    <property type="entry name" value="16S_RimM"/>
    <property type="match status" value="1"/>
</dbReference>
<dbReference type="PANTHER" id="PTHR33692">
    <property type="entry name" value="RIBOSOME MATURATION FACTOR RIMM"/>
    <property type="match status" value="1"/>
</dbReference>
<dbReference type="PANTHER" id="PTHR33692:SF1">
    <property type="entry name" value="RIBOSOME MATURATION FACTOR RIMM"/>
    <property type="match status" value="1"/>
</dbReference>
<dbReference type="Pfam" id="PF24986">
    <property type="entry name" value="PRC_RimM"/>
    <property type="match status" value="1"/>
</dbReference>
<dbReference type="Pfam" id="PF01782">
    <property type="entry name" value="RimM"/>
    <property type="match status" value="1"/>
</dbReference>
<dbReference type="SUPFAM" id="SSF50346">
    <property type="entry name" value="PRC-barrel domain"/>
    <property type="match status" value="1"/>
</dbReference>
<dbReference type="SUPFAM" id="SSF50447">
    <property type="entry name" value="Translation proteins"/>
    <property type="match status" value="1"/>
</dbReference>
<gene>
    <name evidence="1" type="primary">rimM</name>
    <name type="ordered locus">SA1082</name>
</gene>
<keyword id="KW-0143">Chaperone</keyword>
<keyword id="KW-0963">Cytoplasm</keyword>
<keyword id="KW-0690">Ribosome biogenesis</keyword>
<keyword id="KW-0698">rRNA processing</keyword>
<proteinExistence type="evidence at protein level"/>
<name>RIMM_STAAN</name>
<organism>
    <name type="scientific">Staphylococcus aureus (strain N315)</name>
    <dbReference type="NCBI Taxonomy" id="158879"/>
    <lineage>
        <taxon>Bacteria</taxon>
        <taxon>Bacillati</taxon>
        <taxon>Bacillota</taxon>
        <taxon>Bacilli</taxon>
        <taxon>Bacillales</taxon>
        <taxon>Staphylococcaceae</taxon>
        <taxon>Staphylococcus</taxon>
    </lineage>
</organism>
<comment type="function">
    <text evidence="1">An accessory protein needed during the final step in the assembly of 30S ribosomal subunit, possibly for assembly of the head region. Essential for efficient processing of 16S rRNA. May be needed both before and after RbfA during the maturation of 16S rRNA. It has affinity for free ribosomal 30S subunits but not for 70S ribosomes.</text>
</comment>
<comment type="subunit">
    <text evidence="1">Binds ribosomal protein uS19.</text>
</comment>
<comment type="subcellular location">
    <subcellularLocation>
        <location evidence="1">Cytoplasm</location>
    </subcellularLocation>
</comment>
<comment type="domain">
    <text evidence="1">The PRC barrel domain binds ribosomal protein uS19.</text>
</comment>
<comment type="similarity">
    <text evidence="1">Belongs to the RimM family.</text>
</comment>
<evidence type="ECO:0000255" key="1">
    <source>
        <dbReference type="HAMAP-Rule" id="MF_00014"/>
    </source>
</evidence>
<protein>
    <recommendedName>
        <fullName evidence="1">Ribosome maturation factor RimM</fullName>
    </recommendedName>
</protein>